<organism>
    <name type="scientific">Buchnera aphidicola subsp. Melaphis rhois</name>
    <dbReference type="NCBI Taxonomy" id="118103"/>
    <lineage>
        <taxon>Bacteria</taxon>
        <taxon>Pseudomonadati</taxon>
        <taxon>Pseudomonadota</taxon>
        <taxon>Gammaproteobacteria</taxon>
        <taxon>Enterobacterales</taxon>
        <taxon>Erwiniaceae</taxon>
        <taxon>Buchnera</taxon>
    </lineage>
</organism>
<accession>Q9RQ47</accession>
<gene>
    <name evidence="1" type="primary">ilvC</name>
</gene>
<sequence>MKNYFNSLNFRQKLINLQKCKLIDNQFLSEKNNVLKGKNIVIVGCGSQGLNQGLNMRDSGLNISYALRDDSIFNKNQSWINATSNGFFVGTYENIIPTADLVINLTPDKQHEQVVNVLQKFMKPNSVLGFSHGFNIVEVGQLIRNDITVIMVAPKCPGTEVREEYKRGFGVPALIAVHSENDPHDIGFEIAKSWAISIGSHHAGILHSSFIAEVKSDLMGEQTILCGMLQASSLVCYNQLIFQGVNPSYAGKLIQTGWEVITESVKHGGITLMLDRLSNTAKIRAYFLSKKLKKIFFPLFRKHMDDIISGEFSKNMMFDWKNNDQQLKEWRTEIQNTDFEKCNIYYKQIPEQEYFDNGLLMVAILKAGIELSFEIMIETGIKEESAYYESLHELPLIANTIARKRLYEMNLVISDTAEYGSYLFSHAAIPLLKKFMNELQPGDLGNKISTSELDNITLYKVNAKIESHPIEIIGKKLRLYMTSMVPIKTK</sequence>
<proteinExistence type="inferred from homology"/>
<protein>
    <recommendedName>
        <fullName evidence="1">Ketol-acid reductoisomerase (NADP(+))</fullName>
        <shortName evidence="1">KARI</shortName>
        <ecNumber evidence="1">1.1.1.86</ecNumber>
    </recommendedName>
    <alternativeName>
        <fullName evidence="1">Acetohydroxy-acid isomeroreductase</fullName>
        <shortName evidence="1">AHIR</shortName>
    </alternativeName>
    <alternativeName>
        <fullName evidence="1">Alpha-keto-beta-hydroxylacyl reductoisomerase</fullName>
    </alternativeName>
    <alternativeName>
        <fullName evidence="1">Ketol-acid reductoisomerase type 2</fullName>
    </alternativeName>
    <alternativeName>
        <fullName evidence="1">Ketol-acid reductoisomerase type II</fullName>
    </alternativeName>
</protein>
<keyword id="KW-0028">Amino-acid biosynthesis</keyword>
<keyword id="KW-0100">Branched-chain amino acid biosynthesis</keyword>
<keyword id="KW-0460">Magnesium</keyword>
<keyword id="KW-0479">Metal-binding</keyword>
<keyword id="KW-0521">NADP</keyword>
<keyword id="KW-0560">Oxidoreductase</keyword>
<keyword id="KW-0677">Repeat</keyword>
<feature type="chain" id="PRO_0000151290" description="Ketol-acid reductoisomerase (NADP(+))">
    <location>
        <begin position="1"/>
        <end position="490"/>
    </location>
</feature>
<feature type="domain" description="KARI N-terminal Rossmann" evidence="2">
    <location>
        <begin position="15"/>
        <end position="208"/>
    </location>
</feature>
<feature type="domain" description="KARI C-terminal knotted 1" evidence="3">
    <location>
        <begin position="209"/>
        <end position="344"/>
    </location>
</feature>
<feature type="domain" description="KARI C-terminal knotted 2" evidence="3">
    <location>
        <begin position="345"/>
        <end position="484"/>
    </location>
</feature>
<feature type="active site" evidence="1">
    <location>
        <position position="132"/>
    </location>
</feature>
<feature type="binding site" evidence="1">
    <location>
        <begin position="45"/>
        <end position="48"/>
    </location>
    <ligand>
        <name>NADP(+)</name>
        <dbReference type="ChEBI" id="CHEBI:58349"/>
    </ligand>
</feature>
<feature type="binding site" evidence="1">
    <location>
        <position position="68"/>
    </location>
    <ligand>
        <name>NADP(+)</name>
        <dbReference type="ChEBI" id="CHEBI:58349"/>
    </ligand>
</feature>
<feature type="binding site" evidence="1">
    <location>
        <position position="78"/>
    </location>
    <ligand>
        <name>NADP(+)</name>
        <dbReference type="ChEBI" id="CHEBI:58349"/>
    </ligand>
</feature>
<feature type="binding site" evidence="1">
    <location>
        <begin position="108"/>
        <end position="110"/>
    </location>
    <ligand>
        <name>NADP(+)</name>
        <dbReference type="ChEBI" id="CHEBI:58349"/>
    </ligand>
</feature>
<feature type="binding site" evidence="1">
    <location>
        <position position="158"/>
    </location>
    <ligand>
        <name>NADP(+)</name>
        <dbReference type="ChEBI" id="CHEBI:58349"/>
    </ligand>
</feature>
<feature type="binding site" evidence="1">
    <location>
        <position position="217"/>
    </location>
    <ligand>
        <name>Mg(2+)</name>
        <dbReference type="ChEBI" id="CHEBI:18420"/>
        <label>1</label>
    </ligand>
</feature>
<feature type="binding site" evidence="1">
    <location>
        <position position="217"/>
    </location>
    <ligand>
        <name>Mg(2+)</name>
        <dbReference type="ChEBI" id="CHEBI:18420"/>
        <label>2</label>
    </ligand>
</feature>
<feature type="binding site" evidence="1">
    <location>
        <position position="221"/>
    </location>
    <ligand>
        <name>Mg(2+)</name>
        <dbReference type="ChEBI" id="CHEBI:18420"/>
        <label>1</label>
    </ligand>
</feature>
<feature type="binding site" evidence="1">
    <location>
        <position position="389"/>
    </location>
    <ligand>
        <name>Mg(2+)</name>
        <dbReference type="ChEBI" id="CHEBI:18420"/>
        <label>2</label>
    </ligand>
</feature>
<feature type="binding site" evidence="1">
    <location>
        <position position="393"/>
    </location>
    <ligand>
        <name>Mg(2+)</name>
        <dbReference type="ChEBI" id="CHEBI:18420"/>
        <label>2</label>
    </ligand>
</feature>
<feature type="binding site" evidence="1">
    <location>
        <position position="414"/>
    </location>
    <ligand>
        <name>substrate</name>
    </ligand>
</feature>
<evidence type="ECO:0000255" key="1">
    <source>
        <dbReference type="HAMAP-Rule" id="MF_00435"/>
    </source>
</evidence>
<evidence type="ECO:0000255" key="2">
    <source>
        <dbReference type="PROSITE-ProRule" id="PRU01197"/>
    </source>
</evidence>
<evidence type="ECO:0000255" key="3">
    <source>
        <dbReference type="PROSITE-ProRule" id="PRU01198"/>
    </source>
</evidence>
<comment type="function">
    <text evidence="1">Involved in the biosynthesis of branched-chain amino acids (BCAA). Catalyzes an alkyl-migration followed by a ketol-acid reduction of (S)-2-acetolactate (S2AL) to yield (R)-2,3-dihydroxy-isovalerate. In the isomerase reaction, S2AL is rearranged via a Mg-dependent methyl migration to produce 3-hydroxy-3-methyl-2-ketobutyrate (HMKB). In the reductase reaction, this 2-ketoacid undergoes a metal-dependent reduction by NADPH to yield (R)-2,3-dihydroxy-isovalerate.</text>
</comment>
<comment type="catalytic activity">
    <reaction evidence="1">
        <text>(2R)-2,3-dihydroxy-3-methylbutanoate + NADP(+) = (2S)-2-acetolactate + NADPH + H(+)</text>
        <dbReference type="Rhea" id="RHEA:22068"/>
        <dbReference type="ChEBI" id="CHEBI:15378"/>
        <dbReference type="ChEBI" id="CHEBI:49072"/>
        <dbReference type="ChEBI" id="CHEBI:57783"/>
        <dbReference type="ChEBI" id="CHEBI:58349"/>
        <dbReference type="ChEBI" id="CHEBI:58476"/>
        <dbReference type="EC" id="1.1.1.86"/>
    </reaction>
</comment>
<comment type="catalytic activity">
    <reaction evidence="1">
        <text>(2R,3R)-2,3-dihydroxy-3-methylpentanoate + NADP(+) = (S)-2-ethyl-2-hydroxy-3-oxobutanoate + NADPH + H(+)</text>
        <dbReference type="Rhea" id="RHEA:13493"/>
        <dbReference type="ChEBI" id="CHEBI:15378"/>
        <dbReference type="ChEBI" id="CHEBI:49256"/>
        <dbReference type="ChEBI" id="CHEBI:49258"/>
        <dbReference type="ChEBI" id="CHEBI:57783"/>
        <dbReference type="ChEBI" id="CHEBI:58349"/>
        <dbReference type="EC" id="1.1.1.86"/>
    </reaction>
</comment>
<comment type="cofactor">
    <cofactor evidence="1">
        <name>Mg(2+)</name>
        <dbReference type="ChEBI" id="CHEBI:18420"/>
    </cofactor>
    <text evidence="1">Binds 2 magnesium ions per subunit.</text>
</comment>
<comment type="pathway">
    <text evidence="1">Amino-acid biosynthesis; L-isoleucine biosynthesis; L-isoleucine from 2-oxobutanoate: step 2/4.</text>
</comment>
<comment type="pathway">
    <text evidence="1">Amino-acid biosynthesis; L-valine biosynthesis; L-valine from pyruvate: step 2/4.</text>
</comment>
<comment type="similarity">
    <text evidence="1">Belongs to the ketol-acid reductoisomerase family.</text>
</comment>
<dbReference type="EC" id="1.1.1.86" evidence="1"/>
<dbReference type="EMBL" id="AF130814">
    <property type="protein sequence ID" value="AAF13807.1"/>
    <property type="molecule type" value="Genomic_DNA"/>
</dbReference>
<dbReference type="SMR" id="Q9RQ47"/>
<dbReference type="UniPathway" id="UPA00047">
    <property type="reaction ID" value="UER00056"/>
</dbReference>
<dbReference type="UniPathway" id="UPA00049">
    <property type="reaction ID" value="UER00060"/>
</dbReference>
<dbReference type="GO" id="GO:0005829">
    <property type="term" value="C:cytosol"/>
    <property type="evidence" value="ECO:0007669"/>
    <property type="project" value="TreeGrafter"/>
</dbReference>
<dbReference type="GO" id="GO:0004455">
    <property type="term" value="F:ketol-acid reductoisomerase activity"/>
    <property type="evidence" value="ECO:0007669"/>
    <property type="project" value="UniProtKB-UniRule"/>
</dbReference>
<dbReference type="GO" id="GO:0000287">
    <property type="term" value="F:magnesium ion binding"/>
    <property type="evidence" value="ECO:0007669"/>
    <property type="project" value="UniProtKB-UniRule"/>
</dbReference>
<dbReference type="GO" id="GO:0009097">
    <property type="term" value="P:isoleucine biosynthetic process"/>
    <property type="evidence" value="ECO:0007669"/>
    <property type="project" value="UniProtKB-UniRule"/>
</dbReference>
<dbReference type="GO" id="GO:0009099">
    <property type="term" value="P:L-valine biosynthetic process"/>
    <property type="evidence" value="ECO:0007669"/>
    <property type="project" value="UniProtKB-UniRule"/>
</dbReference>
<dbReference type="Gene3D" id="1.10.1040.10">
    <property type="entry name" value="N-(1-d-carboxylethyl)-l-norvaline Dehydrogenase, domain 2"/>
    <property type="match status" value="1"/>
</dbReference>
<dbReference type="Gene3D" id="3.40.50.720">
    <property type="entry name" value="NAD(P)-binding Rossmann-like Domain"/>
    <property type="match status" value="1"/>
</dbReference>
<dbReference type="HAMAP" id="MF_00435">
    <property type="entry name" value="IlvC"/>
    <property type="match status" value="1"/>
</dbReference>
<dbReference type="InterPro" id="IPR008927">
    <property type="entry name" value="6-PGluconate_DH-like_C_sf"/>
</dbReference>
<dbReference type="InterPro" id="IPR013328">
    <property type="entry name" value="6PGD_dom2"/>
</dbReference>
<dbReference type="InterPro" id="IPR013023">
    <property type="entry name" value="KARI"/>
</dbReference>
<dbReference type="InterPro" id="IPR000506">
    <property type="entry name" value="KARI_C"/>
</dbReference>
<dbReference type="InterPro" id="IPR013116">
    <property type="entry name" value="KARI_N"/>
</dbReference>
<dbReference type="InterPro" id="IPR036291">
    <property type="entry name" value="NAD(P)-bd_dom_sf"/>
</dbReference>
<dbReference type="NCBIfam" id="TIGR00465">
    <property type="entry name" value="ilvC"/>
    <property type="match status" value="1"/>
</dbReference>
<dbReference type="NCBIfam" id="NF003557">
    <property type="entry name" value="PRK05225.1"/>
    <property type="match status" value="1"/>
</dbReference>
<dbReference type="PANTHER" id="PTHR21371">
    <property type="entry name" value="KETOL-ACID REDUCTOISOMERASE, MITOCHONDRIAL"/>
    <property type="match status" value="1"/>
</dbReference>
<dbReference type="PANTHER" id="PTHR21371:SF1">
    <property type="entry name" value="KETOL-ACID REDUCTOISOMERASE, MITOCHONDRIAL"/>
    <property type="match status" value="1"/>
</dbReference>
<dbReference type="Pfam" id="PF01450">
    <property type="entry name" value="KARI_C"/>
    <property type="match status" value="2"/>
</dbReference>
<dbReference type="Pfam" id="PF07991">
    <property type="entry name" value="KARI_N"/>
    <property type="match status" value="1"/>
</dbReference>
<dbReference type="SUPFAM" id="SSF48179">
    <property type="entry name" value="6-phosphogluconate dehydrogenase C-terminal domain-like"/>
    <property type="match status" value="2"/>
</dbReference>
<dbReference type="SUPFAM" id="SSF51735">
    <property type="entry name" value="NAD(P)-binding Rossmann-fold domains"/>
    <property type="match status" value="1"/>
</dbReference>
<dbReference type="PROSITE" id="PS51851">
    <property type="entry name" value="KARI_C"/>
    <property type="match status" value="2"/>
</dbReference>
<dbReference type="PROSITE" id="PS51850">
    <property type="entry name" value="KARI_N"/>
    <property type="match status" value="1"/>
</dbReference>
<name>ILVC_BUCMH</name>
<reference key="1">
    <citation type="journal article" date="1999" name="Mol. Biol. Evol.">
        <title>Sequence evolution in bacterial endosymbionts having extreme base compositions.</title>
        <authorList>
            <person name="Clark M.A."/>
            <person name="Moran N.A."/>
            <person name="Baumann P."/>
        </authorList>
    </citation>
    <scope>NUCLEOTIDE SEQUENCE [GENOMIC DNA]</scope>
</reference>